<organism>
    <name type="scientific">Palmaria palmata</name>
    <name type="common">Dulse</name>
    <name type="synonym">Rhodymenia palmata</name>
    <dbReference type="NCBI Taxonomy" id="2822"/>
    <lineage>
        <taxon>Eukaryota</taxon>
        <taxon>Rhodophyta</taxon>
        <taxon>Florideophyceae</taxon>
        <taxon>Nemaliophycidae</taxon>
        <taxon>Palmariales</taxon>
        <taxon>Palmariaceae</taxon>
        <taxon>Palmaria</taxon>
    </lineage>
</organism>
<reference key="1">
    <citation type="submission" date="1995-06" db="EMBL/GenBank/DDBJ databases">
        <title>Nucleotide sequence of psbA gene from Palmaria palmata.</title>
        <authorList>
            <person name="Singh R.K."/>
        </authorList>
    </citation>
    <scope>NUCLEOTIDE SEQUENCE [GENOMIC DNA]</scope>
</reference>
<dbReference type="EC" id="1.10.3.9" evidence="1"/>
<dbReference type="EMBL" id="U28165">
    <property type="protein sequence ID" value="AAC99848.1"/>
    <property type="molecule type" value="Genomic_DNA"/>
</dbReference>
<dbReference type="SMR" id="O98733"/>
<dbReference type="GO" id="GO:0009535">
    <property type="term" value="C:chloroplast thylakoid membrane"/>
    <property type="evidence" value="ECO:0007669"/>
    <property type="project" value="UniProtKB-SubCell"/>
</dbReference>
<dbReference type="GO" id="GO:0009523">
    <property type="term" value="C:photosystem II"/>
    <property type="evidence" value="ECO:0007669"/>
    <property type="project" value="UniProtKB-KW"/>
</dbReference>
<dbReference type="GO" id="GO:0016168">
    <property type="term" value="F:chlorophyll binding"/>
    <property type="evidence" value="ECO:0007669"/>
    <property type="project" value="UniProtKB-UniRule"/>
</dbReference>
<dbReference type="GO" id="GO:0045156">
    <property type="term" value="F:electron transporter, transferring electrons within the cyclic electron transport pathway of photosynthesis activity"/>
    <property type="evidence" value="ECO:0007669"/>
    <property type="project" value="InterPro"/>
</dbReference>
<dbReference type="GO" id="GO:0005506">
    <property type="term" value="F:iron ion binding"/>
    <property type="evidence" value="ECO:0007669"/>
    <property type="project" value="UniProtKB-UniRule"/>
</dbReference>
<dbReference type="GO" id="GO:0016682">
    <property type="term" value="F:oxidoreductase activity, acting on diphenols and related substances as donors, oxygen as acceptor"/>
    <property type="evidence" value="ECO:0007669"/>
    <property type="project" value="UniProtKB-UniRule"/>
</dbReference>
<dbReference type="GO" id="GO:0009772">
    <property type="term" value="P:photosynthetic electron transport in photosystem II"/>
    <property type="evidence" value="ECO:0007669"/>
    <property type="project" value="InterPro"/>
</dbReference>
<dbReference type="GO" id="GO:0009635">
    <property type="term" value="P:response to herbicide"/>
    <property type="evidence" value="ECO:0007669"/>
    <property type="project" value="UniProtKB-KW"/>
</dbReference>
<dbReference type="CDD" id="cd09289">
    <property type="entry name" value="Photosystem-II_D1"/>
    <property type="match status" value="1"/>
</dbReference>
<dbReference type="FunFam" id="1.20.85.10:FF:000002">
    <property type="entry name" value="Photosystem II protein D1"/>
    <property type="match status" value="1"/>
</dbReference>
<dbReference type="Gene3D" id="1.20.85.10">
    <property type="entry name" value="Photosystem II protein D1-like"/>
    <property type="match status" value="1"/>
</dbReference>
<dbReference type="HAMAP" id="MF_01379">
    <property type="entry name" value="PSII_PsbA_D1"/>
    <property type="match status" value="1"/>
</dbReference>
<dbReference type="InterPro" id="IPR055266">
    <property type="entry name" value="D1/D2"/>
</dbReference>
<dbReference type="InterPro" id="IPR036854">
    <property type="entry name" value="Photo_II_D1/D2_sf"/>
</dbReference>
<dbReference type="InterPro" id="IPR000484">
    <property type="entry name" value="Photo_RC_L/M"/>
</dbReference>
<dbReference type="InterPro" id="IPR055265">
    <property type="entry name" value="Photo_RC_L/M_CS"/>
</dbReference>
<dbReference type="InterPro" id="IPR005867">
    <property type="entry name" value="PSII_D1"/>
</dbReference>
<dbReference type="NCBIfam" id="TIGR01151">
    <property type="entry name" value="psbA"/>
    <property type="match status" value="1"/>
</dbReference>
<dbReference type="PANTHER" id="PTHR33149:SF12">
    <property type="entry name" value="PHOTOSYSTEM II D2 PROTEIN"/>
    <property type="match status" value="1"/>
</dbReference>
<dbReference type="PANTHER" id="PTHR33149">
    <property type="entry name" value="PHOTOSYSTEM II PROTEIN D1"/>
    <property type="match status" value="1"/>
</dbReference>
<dbReference type="Pfam" id="PF00124">
    <property type="entry name" value="Photo_RC"/>
    <property type="match status" value="1"/>
</dbReference>
<dbReference type="PRINTS" id="PR00256">
    <property type="entry name" value="REACTNCENTRE"/>
</dbReference>
<dbReference type="SUPFAM" id="SSF81483">
    <property type="entry name" value="Bacterial photosystem II reaction centre, L and M subunits"/>
    <property type="match status" value="1"/>
</dbReference>
<dbReference type="PROSITE" id="PS00244">
    <property type="entry name" value="REACTION_CENTER"/>
    <property type="match status" value="1"/>
</dbReference>
<accession>O98733</accession>
<keyword id="KW-0106">Calcium</keyword>
<keyword id="KW-0148">Chlorophyll</keyword>
<keyword id="KW-0150">Chloroplast</keyword>
<keyword id="KW-0157">Chromophore</keyword>
<keyword id="KW-0249">Electron transport</keyword>
<keyword id="KW-0359">Herbicide resistance</keyword>
<keyword id="KW-0408">Iron</keyword>
<keyword id="KW-0460">Magnesium</keyword>
<keyword id="KW-0464">Manganese</keyword>
<keyword id="KW-0472">Membrane</keyword>
<keyword id="KW-0479">Metal-binding</keyword>
<keyword id="KW-0560">Oxidoreductase</keyword>
<keyword id="KW-0602">Photosynthesis</keyword>
<keyword id="KW-0604">Photosystem II</keyword>
<keyword id="KW-0934">Plastid</keyword>
<keyword id="KW-0793">Thylakoid</keyword>
<keyword id="KW-0812">Transmembrane</keyword>
<keyword id="KW-1133">Transmembrane helix</keyword>
<keyword id="KW-0813">Transport</keyword>
<comment type="function">
    <text evidence="1">Photosystem II (PSII) is a light-driven water:plastoquinone oxidoreductase that uses light energy to abstract electrons from H(2)O, generating O(2) and a proton gradient subsequently used for ATP formation. It consists of a core antenna complex that captures photons, and an electron transfer chain that converts photonic excitation into a charge separation. The D1/D2 (PsbA/PsbD) reaction center heterodimer binds P680, the primary electron donor of PSII as well as several subsequent electron acceptors.</text>
</comment>
<comment type="catalytic activity">
    <reaction evidence="1">
        <text>2 a plastoquinone + 4 hnu + 2 H2O = 2 a plastoquinol + O2</text>
        <dbReference type="Rhea" id="RHEA:36359"/>
        <dbReference type="Rhea" id="RHEA-COMP:9561"/>
        <dbReference type="Rhea" id="RHEA-COMP:9562"/>
        <dbReference type="ChEBI" id="CHEBI:15377"/>
        <dbReference type="ChEBI" id="CHEBI:15379"/>
        <dbReference type="ChEBI" id="CHEBI:17757"/>
        <dbReference type="ChEBI" id="CHEBI:30212"/>
        <dbReference type="ChEBI" id="CHEBI:62192"/>
        <dbReference type="EC" id="1.10.3.9"/>
    </reaction>
</comment>
<comment type="cofactor">
    <text evidence="1">The D1/D2 heterodimer binds P680, chlorophylls that are the primary electron donor of PSII, and subsequent electron acceptors. It shares a non-heme iron and each subunit binds pheophytin, quinone, additional chlorophylls, carotenoids and lipids. D1 provides most of the ligands for the Mn4-Ca-O5 cluster of the oxygen-evolving complex (OEC). There is also a Cl(-1) ion associated with D1 and D2, which is required for oxygen evolution. The PSII complex binds additional chlorophylls, carotenoids and specific lipids.</text>
</comment>
<comment type="subunit">
    <text evidence="1">PSII is composed of 1 copy each of membrane proteins PsbA, PsbB, PsbC, PsbD, PsbE, PsbF, PsbH, PsbI, PsbJ, PsbK, PsbL, PsbM, PsbT, PsbX, PsbY, PsbZ, Psb30/Ycf12, at least 3 peripheral proteins of the oxygen-evolving complex and a large number of cofactors. It forms dimeric complexes.</text>
</comment>
<comment type="subcellular location">
    <subcellularLocation>
        <location evidence="1">Plastid</location>
        <location evidence="1">Chloroplast thylakoid membrane</location>
        <topology evidence="1">Multi-pass membrane protein</topology>
    </subcellularLocation>
</comment>
<comment type="PTM">
    <text evidence="1">Tyr-161 forms a radical intermediate that is referred to as redox-active TyrZ, YZ or Y-Z.</text>
</comment>
<comment type="PTM">
    <text evidence="1">C-terminally processed by CTPA; processing is essential to allow assembly of the oxygen-evolving complex and thus photosynthetic growth.</text>
</comment>
<comment type="miscellaneous">
    <text evidence="1">2 of the reaction center chlorophylls (ChlD1 and ChlD2) are entirely coordinated by water.</text>
</comment>
<comment type="miscellaneous">
    <text evidence="1">Herbicides such as atrazine, BNT, diuron or ioxynil bind in the Q(B) binding site and block subsequent electron transfer.</text>
</comment>
<comment type="similarity">
    <text evidence="1">Belongs to the reaction center PufL/M/PsbA/D family.</text>
</comment>
<geneLocation type="chloroplast"/>
<protein>
    <recommendedName>
        <fullName evidence="1">Photosystem II protein D1</fullName>
        <shortName evidence="1">PSII D1 protein</shortName>
        <ecNumber evidence="1">1.10.3.9</ecNumber>
    </recommendedName>
    <alternativeName>
        <fullName evidence="1">Photosystem II Q(B) protein</fullName>
    </alternativeName>
</protein>
<sequence>MTATLERRESASLWERFCTWITSTENRLYIGWFGVVMIPTLLTATSVFIIAFVAAPPVDIDGIREPVAGSLLYGNNIISGAIIPSSAAIGIHFYPIWEAASLDEWLYNGGPYQLIVLHFLLGVCCYIGREWELSYRLGMRPWISVAFTAPVAAAAAVFLVYPIGQGSFSDGMPLGISGTFNFMLVFQAEHNILMHPFHQLGVAGVFGGSLFSAMHGSLVTSSLIRETTENESANYGYKFGQEEETYNIVAAHGYFGRLIFQYASFNNSRALHFFLGAWPVVGIWLTSMSVSTMALNLNGFNFNQSVVDSQGRVINTWADILNRANLGMEVMHERNAHNFPLDLASGDSCPVALVAPSING</sequence>
<feature type="chain" id="PRO_0000090460" description="Photosystem II protein D1" evidence="1">
    <location>
        <begin position="1"/>
        <end position="344"/>
    </location>
</feature>
<feature type="propeptide" id="PRO_0000316512" evidence="1">
    <location>
        <begin position="345"/>
        <end position="360"/>
    </location>
</feature>
<feature type="transmembrane region" description="Helical" evidence="1">
    <location>
        <begin position="29"/>
        <end position="46"/>
    </location>
</feature>
<feature type="transmembrane region" description="Helical" evidence="1">
    <location>
        <begin position="118"/>
        <end position="133"/>
    </location>
</feature>
<feature type="transmembrane region" description="Helical" evidence="1">
    <location>
        <begin position="142"/>
        <end position="156"/>
    </location>
</feature>
<feature type="transmembrane region" description="Helical" evidence="1">
    <location>
        <begin position="197"/>
        <end position="218"/>
    </location>
</feature>
<feature type="transmembrane region" description="Helical" evidence="1">
    <location>
        <begin position="274"/>
        <end position="288"/>
    </location>
</feature>
<feature type="binding site" description="axial binding residue" evidence="1">
    <location>
        <position position="118"/>
    </location>
    <ligand>
        <name>chlorophyll a</name>
        <dbReference type="ChEBI" id="CHEBI:58416"/>
        <label>ChlzD1</label>
    </ligand>
    <ligandPart>
        <name>Mg</name>
        <dbReference type="ChEBI" id="CHEBI:25107"/>
    </ligandPart>
</feature>
<feature type="binding site" evidence="1">
    <location>
        <position position="126"/>
    </location>
    <ligand>
        <name>pheophytin a</name>
        <dbReference type="ChEBI" id="CHEBI:136840"/>
        <label>D1</label>
    </ligand>
</feature>
<feature type="binding site" evidence="1">
    <location>
        <position position="170"/>
    </location>
    <ligand>
        <name>[CaMn4O5] cluster</name>
        <dbReference type="ChEBI" id="CHEBI:189552"/>
    </ligand>
</feature>
<feature type="binding site" evidence="1">
    <location>
        <position position="189"/>
    </location>
    <ligand>
        <name>[CaMn4O5] cluster</name>
        <dbReference type="ChEBI" id="CHEBI:189552"/>
    </ligand>
</feature>
<feature type="binding site" description="axial binding residue" evidence="1">
    <location>
        <position position="198"/>
    </location>
    <ligand>
        <name>chlorophyll a</name>
        <dbReference type="ChEBI" id="CHEBI:58416"/>
        <label>PD1</label>
    </ligand>
    <ligandPart>
        <name>Mg</name>
        <dbReference type="ChEBI" id="CHEBI:25107"/>
    </ligandPart>
</feature>
<feature type="binding site" evidence="1">
    <location>
        <position position="215"/>
    </location>
    <ligand>
        <name>a quinone</name>
        <dbReference type="ChEBI" id="CHEBI:132124"/>
        <label>B</label>
    </ligand>
</feature>
<feature type="binding site" evidence="1">
    <location>
        <position position="215"/>
    </location>
    <ligand>
        <name>Fe cation</name>
        <dbReference type="ChEBI" id="CHEBI:24875"/>
        <note>ligand shared with heterodimeric partner</note>
    </ligand>
</feature>
<feature type="binding site" evidence="1">
    <location>
        <begin position="264"/>
        <end position="265"/>
    </location>
    <ligand>
        <name>a quinone</name>
        <dbReference type="ChEBI" id="CHEBI:132124"/>
        <label>B</label>
    </ligand>
</feature>
<feature type="binding site" evidence="1">
    <location>
        <position position="272"/>
    </location>
    <ligand>
        <name>Fe cation</name>
        <dbReference type="ChEBI" id="CHEBI:24875"/>
        <note>ligand shared with heterodimeric partner</note>
    </ligand>
</feature>
<feature type="binding site" evidence="1">
    <location>
        <position position="332"/>
    </location>
    <ligand>
        <name>[CaMn4O5] cluster</name>
        <dbReference type="ChEBI" id="CHEBI:189552"/>
    </ligand>
</feature>
<feature type="binding site" evidence="1">
    <location>
        <position position="333"/>
    </location>
    <ligand>
        <name>[CaMn4O5] cluster</name>
        <dbReference type="ChEBI" id="CHEBI:189552"/>
    </ligand>
</feature>
<feature type="binding site" evidence="1">
    <location>
        <position position="342"/>
    </location>
    <ligand>
        <name>[CaMn4O5] cluster</name>
        <dbReference type="ChEBI" id="CHEBI:189552"/>
    </ligand>
</feature>
<feature type="binding site" evidence="1">
    <location>
        <position position="344"/>
    </location>
    <ligand>
        <name>[CaMn4O5] cluster</name>
        <dbReference type="ChEBI" id="CHEBI:189552"/>
    </ligand>
</feature>
<feature type="site" description="Tyrosine radical intermediate" evidence="1">
    <location>
        <position position="161"/>
    </location>
</feature>
<feature type="site" description="Stabilizes free radical intermediate" evidence="1">
    <location>
        <position position="190"/>
    </location>
</feature>
<feature type="site" description="Cleavage; by CTPA" evidence="1">
    <location>
        <begin position="344"/>
        <end position="345"/>
    </location>
</feature>
<name>PSBA_PALPL</name>
<evidence type="ECO:0000255" key="1">
    <source>
        <dbReference type="HAMAP-Rule" id="MF_01379"/>
    </source>
</evidence>
<proteinExistence type="inferred from homology"/>
<gene>
    <name evidence="1" type="primary">psbA</name>
</gene>